<dbReference type="EC" id="1.1.1.-" evidence="4"/>
<dbReference type="EMBL" id="OP947598">
    <property type="protein sequence ID" value="WBW48723.1"/>
    <property type="molecule type" value="mRNA"/>
</dbReference>
<dbReference type="SMR" id="P0DXH3"/>
<dbReference type="UniPathway" id="UPA00213"/>
<dbReference type="GO" id="GO:0016491">
    <property type="term" value="F:oxidoreductase activity"/>
    <property type="evidence" value="ECO:0007669"/>
    <property type="project" value="UniProtKB-KW"/>
</dbReference>
<dbReference type="FunFam" id="3.40.50.720:FF:000084">
    <property type="entry name" value="Short-chain dehydrogenase reductase"/>
    <property type="match status" value="1"/>
</dbReference>
<dbReference type="Gene3D" id="3.40.50.720">
    <property type="entry name" value="NAD(P)-binding Rossmann-like Domain"/>
    <property type="match status" value="1"/>
</dbReference>
<dbReference type="InterPro" id="IPR036291">
    <property type="entry name" value="NAD(P)-bd_dom_sf"/>
</dbReference>
<dbReference type="InterPro" id="IPR020904">
    <property type="entry name" value="Sc_DH/Rdtase_CS"/>
</dbReference>
<dbReference type="InterPro" id="IPR002347">
    <property type="entry name" value="SDR_fam"/>
</dbReference>
<dbReference type="PANTHER" id="PTHR43180">
    <property type="entry name" value="3-OXOACYL-(ACYL-CARRIER-PROTEIN) REDUCTASE (AFU_ORTHOLOGUE AFUA_6G11210)"/>
    <property type="match status" value="1"/>
</dbReference>
<dbReference type="PANTHER" id="PTHR43180:SF37">
    <property type="entry name" value="TROPINONE REDUCTASE-LIKE 2"/>
    <property type="match status" value="1"/>
</dbReference>
<dbReference type="Pfam" id="PF13561">
    <property type="entry name" value="adh_short_C2"/>
    <property type="match status" value="1"/>
</dbReference>
<dbReference type="PRINTS" id="PR00081">
    <property type="entry name" value="GDHRDH"/>
</dbReference>
<dbReference type="PRINTS" id="PR00080">
    <property type="entry name" value="SDRFAMILY"/>
</dbReference>
<dbReference type="SUPFAM" id="SSF51735">
    <property type="entry name" value="NAD(P)-binding Rossmann-fold domains"/>
    <property type="match status" value="1"/>
</dbReference>
<dbReference type="PROSITE" id="PS00061">
    <property type="entry name" value="ADH_SHORT"/>
    <property type="match status" value="1"/>
</dbReference>
<accession>P0DXH3</accession>
<protein>
    <recommendedName>
        <fullName evidence="5">(21S)-21-acetoxyl-apo-melianone synthase SDR</fullName>
        <ecNumber evidence="4">1.1.1.-</ecNumber>
    </recommendedName>
    <alternativeName>
        <fullName evidence="5">Short chain dehydrogenase-reductase</fullName>
        <shortName evidence="5">MaSDR</shortName>
    </alternativeName>
</protein>
<reference key="1">
    <citation type="journal article" date="2023" name="Science">
        <title>Complex scaffold remodeling in plant triterpene biosynthesis.</title>
        <authorList>
            <person name="De La Pena R."/>
            <person name="Hodgson H."/>
            <person name="Liu J.C."/>
            <person name="Stephenson M.J."/>
            <person name="Martin A.C."/>
            <person name="Owen C."/>
            <person name="Harkess A."/>
            <person name="Leebens-Mack J."/>
            <person name="Jimenez L.E."/>
            <person name="Osbourn A."/>
            <person name="Sattely E.S."/>
        </authorList>
    </citation>
    <scope>NUCLEOTIDE SEQUENCE [MRNA]</scope>
    <scope>FUNCTION</scope>
    <scope>CATALYTIC ACTIVITY</scope>
    <scope>PATHWAY</scope>
    <scope>TISSUE SPECIFICITY</scope>
    <source>
        <strain>cv. Valencia</strain>
    </source>
</reference>
<gene>
    <name evidence="5" type="primary">SDR</name>
</gene>
<keyword id="KW-0560">Oxidoreductase</keyword>
<proteinExistence type="evidence at protein level"/>
<sequence>MNSYSSAAPGKRLEGKVAIITGGASGIGATAVQIFHDNGAKVVISDVQDKLGQALADKLGEGVSYIHCDISNENDVINLVDTTVAKYGKLDIMYNNAGVIDRNFGSILDTPKSDLERLLSVNTIGGFLGAKHAARVMVPKQKGCILFTASACTEIAGLGSPAYTVSKYGVVALVKSLAAELGQYGIRVNCVSPYGLATGMSTAGVDPALIESSLSEMGNLKGQVLKTDGIANAALYLACDEASYVSGQNLVVDGGFSILNPTIMKAYNLIN</sequence>
<feature type="chain" id="PRO_0000461458" description="(21S)-21-acetoxyl-apo-melianone synthase SDR">
    <location>
        <begin position="1"/>
        <end position="271"/>
    </location>
</feature>
<feature type="active site" description="Proton donor" evidence="1">
    <location>
        <position position="150"/>
    </location>
</feature>
<feature type="active site" description="Proton acceptor" evidence="3">
    <location>
        <position position="163"/>
    </location>
</feature>
<feature type="active site" description="Proton donor/acceptor" evidence="2">
    <location>
        <position position="167"/>
    </location>
</feature>
<evidence type="ECO:0000250" key="1">
    <source>
        <dbReference type="UniProtKB" id="O93868"/>
    </source>
</evidence>
<evidence type="ECO:0000250" key="2">
    <source>
        <dbReference type="UniProtKB" id="P19337"/>
    </source>
</evidence>
<evidence type="ECO:0000255" key="3">
    <source>
        <dbReference type="PROSITE-ProRule" id="PRU10001"/>
    </source>
</evidence>
<evidence type="ECO:0000269" key="4">
    <source>
    </source>
</evidence>
<evidence type="ECO:0000303" key="5">
    <source>
    </source>
</evidence>
<evidence type="ECO:0000305" key="6"/>
<organism>
    <name type="scientific">Melia azedarach</name>
    <name type="common">Chinaberry tree</name>
    <dbReference type="NCBI Taxonomy" id="155640"/>
    <lineage>
        <taxon>Eukaryota</taxon>
        <taxon>Viridiplantae</taxon>
        <taxon>Streptophyta</taxon>
        <taxon>Embryophyta</taxon>
        <taxon>Tracheophyta</taxon>
        <taxon>Spermatophyta</taxon>
        <taxon>Magnoliopsida</taxon>
        <taxon>eudicotyledons</taxon>
        <taxon>Gunneridae</taxon>
        <taxon>Pentapetalae</taxon>
        <taxon>rosids</taxon>
        <taxon>malvids</taxon>
        <taxon>Sapindales</taxon>
        <taxon>Meliaceae</taxon>
        <taxon>Melia</taxon>
    </lineage>
</organism>
<name>SDR_MELAZ</name>
<comment type="function">
    <text evidence="4">Oxidoreductase involved in the biosynthesis of limonoids triterpene natural products such as azadirachtin, an antifeedant widely used as bioinsecticide, and possessing many medicinal applications including anti-tumoral, anti-malarial, anti-rheumatic, antibacterial, anti-inflammatory, anti-pyretic and diuretic effects (PubMed:36701471). Catalyzes the oxidation of 21-O-acetyl-isomeliandiol to (21S)-21-acetoxyl-apo-melianone (PubMed:36701471).</text>
</comment>
<comment type="catalytic activity">
    <reaction evidence="4">
        <text>21-O-acetyl-isomeliandiol + A = (21S)-21-acetoxyl-apo-melianone + AH2</text>
        <dbReference type="Rhea" id="RHEA:80307"/>
        <dbReference type="ChEBI" id="CHEBI:13193"/>
        <dbReference type="ChEBI" id="CHEBI:17499"/>
        <dbReference type="ChEBI" id="CHEBI:231455"/>
        <dbReference type="ChEBI" id="CHEBI:231456"/>
    </reaction>
    <physiologicalReaction direction="left-to-right" evidence="4">
        <dbReference type="Rhea" id="RHEA:80308"/>
    </physiologicalReaction>
</comment>
<comment type="pathway">
    <text evidence="4">Secondary metabolite biosynthesis; terpenoid biosynthesis.</text>
</comment>
<comment type="tissue specificity">
    <text evidence="4">Mainly expressed in petioles.</text>
</comment>
<comment type="similarity">
    <text evidence="6">Belongs to the short-chain dehydrogenases/reductases (SDR) family.</text>
</comment>